<keyword id="KW-0143">Chaperone</keyword>
<keyword id="KW-0963">Cytoplasm</keyword>
<sequence>MSIKLTPLEDKIIVKQAEAQTQTASGLYIPDNAKEKPQQGEVLAVGPGRRDDKGERIPMDVKVGDKVLYSKYGGTEVHYEGEDYLIVGARDILAILG</sequence>
<name>CH10_BIFLS</name>
<organism>
    <name type="scientific">Bifidobacterium longum subsp. infantis (strain ATCC 15697 / DSM 20088 / JCM 1222 / NCTC 11817 / S12)</name>
    <dbReference type="NCBI Taxonomy" id="391904"/>
    <lineage>
        <taxon>Bacteria</taxon>
        <taxon>Bacillati</taxon>
        <taxon>Actinomycetota</taxon>
        <taxon>Actinomycetes</taxon>
        <taxon>Bifidobacteriales</taxon>
        <taxon>Bifidobacteriaceae</taxon>
        <taxon>Bifidobacterium</taxon>
    </lineage>
</organism>
<protein>
    <recommendedName>
        <fullName evidence="1">Co-chaperonin GroES</fullName>
    </recommendedName>
    <alternativeName>
        <fullName evidence="1">10 kDa chaperonin</fullName>
    </alternativeName>
    <alternativeName>
        <fullName evidence="1">Chaperonin-10</fullName>
        <shortName evidence="1">Cpn10</shortName>
    </alternativeName>
</protein>
<evidence type="ECO:0000255" key="1">
    <source>
        <dbReference type="HAMAP-Rule" id="MF_00580"/>
    </source>
</evidence>
<feature type="chain" id="PRO_1000146889" description="Co-chaperonin GroES">
    <location>
        <begin position="1"/>
        <end position="97"/>
    </location>
</feature>
<reference key="1">
    <citation type="journal article" date="2008" name="Proc. Natl. Acad. Sci. U.S.A.">
        <title>The genome sequence of Bifidobacterium longum subsp. infantis reveals adaptations for milk utilization within the infant microbiome.</title>
        <authorList>
            <person name="Sela D.A."/>
            <person name="Chapman J."/>
            <person name="Adeuya A."/>
            <person name="Kim J.H."/>
            <person name="Chen F."/>
            <person name="Whitehead T.R."/>
            <person name="Lapidus A."/>
            <person name="Rokhsar D.S."/>
            <person name="Lebrilla C.B."/>
            <person name="German J.B."/>
            <person name="Price N.P."/>
            <person name="Richardson P.M."/>
            <person name="Mills D.A."/>
        </authorList>
    </citation>
    <scope>NUCLEOTIDE SEQUENCE [LARGE SCALE GENOMIC DNA]</scope>
    <source>
        <strain>ATCC 15697 / DSM 20088 / JCM 1222 / NCTC 11817 / S12</strain>
    </source>
</reference>
<reference key="2">
    <citation type="journal article" date="2011" name="Nature">
        <title>Bifidobacteria can protect from enteropathogenic infection through production of acetate.</title>
        <authorList>
            <person name="Fukuda S."/>
            <person name="Toh H."/>
            <person name="Hase K."/>
            <person name="Oshima K."/>
            <person name="Nakanishi Y."/>
            <person name="Yoshimura K."/>
            <person name="Tobe T."/>
            <person name="Clarke J.M."/>
            <person name="Topping D.L."/>
            <person name="Suzuki T."/>
            <person name="Taylor T.D."/>
            <person name="Itoh K."/>
            <person name="Kikuchi J."/>
            <person name="Morita H."/>
            <person name="Hattori M."/>
            <person name="Ohno H."/>
        </authorList>
    </citation>
    <scope>NUCLEOTIDE SEQUENCE [LARGE SCALE GENOMIC DNA]</scope>
    <source>
        <strain>ATCC 15697 / DSM 20088 / JCM 1222 / NCTC 11817 / S12</strain>
    </source>
</reference>
<proteinExistence type="inferred from homology"/>
<gene>
    <name evidence="1" type="primary">groES</name>
    <name evidence="1" type="synonym">groS</name>
    <name type="ordered locus">Blon_2257</name>
    <name type="ordered locus">BLIJ_2329</name>
</gene>
<dbReference type="EMBL" id="CP001095">
    <property type="protein sequence ID" value="ACJ53315.1"/>
    <property type="molecule type" value="Genomic_DNA"/>
</dbReference>
<dbReference type="EMBL" id="AP010889">
    <property type="protein sequence ID" value="BAJ69906.1"/>
    <property type="molecule type" value="Genomic_DNA"/>
</dbReference>
<dbReference type="RefSeq" id="WP_007053011.1">
    <property type="nucleotide sequence ID" value="NZ_JDTT01000030.1"/>
</dbReference>
<dbReference type="SMR" id="B7GNF9"/>
<dbReference type="GeneID" id="69578922"/>
<dbReference type="KEGG" id="bln:Blon_2257"/>
<dbReference type="KEGG" id="blon:BLIJ_2329"/>
<dbReference type="PATRIC" id="fig|391904.8.peg.2332"/>
<dbReference type="HOGENOM" id="CLU_132825_2_0_11"/>
<dbReference type="Proteomes" id="UP000001360">
    <property type="component" value="Chromosome"/>
</dbReference>
<dbReference type="GO" id="GO:0005737">
    <property type="term" value="C:cytoplasm"/>
    <property type="evidence" value="ECO:0007669"/>
    <property type="project" value="UniProtKB-SubCell"/>
</dbReference>
<dbReference type="GO" id="GO:0005524">
    <property type="term" value="F:ATP binding"/>
    <property type="evidence" value="ECO:0007669"/>
    <property type="project" value="InterPro"/>
</dbReference>
<dbReference type="GO" id="GO:0046872">
    <property type="term" value="F:metal ion binding"/>
    <property type="evidence" value="ECO:0007669"/>
    <property type="project" value="TreeGrafter"/>
</dbReference>
<dbReference type="GO" id="GO:0044183">
    <property type="term" value="F:protein folding chaperone"/>
    <property type="evidence" value="ECO:0007669"/>
    <property type="project" value="InterPro"/>
</dbReference>
<dbReference type="GO" id="GO:0051087">
    <property type="term" value="F:protein-folding chaperone binding"/>
    <property type="evidence" value="ECO:0007669"/>
    <property type="project" value="TreeGrafter"/>
</dbReference>
<dbReference type="GO" id="GO:0051082">
    <property type="term" value="F:unfolded protein binding"/>
    <property type="evidence" value="ECO:0007669"/>
    <property type="project" value="TreeGrafter"/>
</dbReference>
<dbReference type="GO" id="GO:0051085">
    <property type="term" value="P:chaperone cofactor-dependent protein refolding"/>
    <property type="evidence" value="ECO:0007669"/>
    <property type="project" value="TreeGrafter"/>
</dbReference>
<dbReference type="CDD" id="cd00320">
    <property type="entry name" value="cpn10"/>
    <property type="match status" value="1"/>
</dbReference>
<dbReference type="FunFam" id="2.30.33.40:FF:000001">
    <property type="entry name" value="10 kDa chaperonin"/>
    <property type="match status" value="1"/>
</dbReference>
<dbReference type="Gene3D" id="2.30.33.40">
    <property type="entry name" value="GroES chaperonin"/>
    <property type="match status" value="1"/>
</dbReference>
<dbReference type="HAMAP" id="MF_00580">
    <property type="entry name" value="CH10"/>
    <property type="match status" value="1"/>
</dbReference>
<dbReference type="InterPro" id="IPR020818">
    <property type="entry name" value="Chaperonin_GroES"/>
</dbReference>
<dbReference type="InterPro" id="IPR037124">
    <property type="entry name" value="Chaperonin_GroES_sf"/>
</dbReference>
<dbReference type="InterPro" id="IPR018369">
    <property type="entry name" value="Chaprnonin_Cpn10_CS"/>
</dbReference>
<dbReference type="InterPro" id="IPR011032">
    <property type="entry name" value="GroES-like_sf"/>
</dbReference>
<dbReference type="NCBIfam" id="NF001530">
    <property type="entry name" value="PRK00364.1-6"/>
    <property type="match status" value="1"/>
</dbReference>
<dbReference type="NCBIfam" id="NF001531">
    <property type="entry name" value="PRK00364.2-2"/>
    <property type="match status" value="1"/>
</dbReference>
<dbReference type="NCBIfam" id="NF001533">
    <property type="entry name" value="PRK00364.2-4"/>
    <property type="match status" value="1"/>
</dbReference>
<dbReference type="NCBIfam" id="NF001534">
    <property type="entry name" value="PRK00364.2-5"/>
    <property type="match status" value="1"/>
</dbReference>
<dbReference type="PANTHER" id="PTHR10772">
    <property type="entry name" value="10 KDA HEAT SHOCK PROTEIN"/>
    <property type="match status" value="1"/>
</dbReference>
<dbReference type="PANTHER" id="PTHR10772:SF58">
    <property type="entry name" value="CO-CHAPERONIN GROES"/>
    <property type="match status" value="1"/>
</dbReference>
<dbReference type="Pfam" id="PF00166">
    <property type="entry name" value="Cpn10"/>
    <property type="match status" value="1"/>
</dbReference>
<dbReference type="PRINTS" id="PR00297">
    <property type="entry name" value="CHAPERONIN10"/>
</dbReference>
<dbReference type="SMART" id="SM00883">
    <property type="entry name" value="Cpn10"/>
    <property type="match status" value="1"/>
</dbReference>
<dbReference type="SUPFAM" id="SSF50129">
    <property type="entry name" value="GroES-like"/>
    <property type="match status" value="1"/>
</dbReference>
<dbReference type="PROSITE" id="PS00681">
    <property type="entry name" value="CHAPERONINS_CPN10"/>
    <property type="match status" value="1"/>
</dbReference>
<comment type="function">
    <text evidence="1">Together with the chaperonin GroEL, plays an essential role in assisting protein folding. The GroEL-GroES system forms a nano-cage that allows encapsulation of the non-native substrate proteins and provides a physical environment optimized to promote and accelerate protein folding. GroES binds to the apical surface of the GroEL ring, thereby capping the opening of the GroEL channel.</text>
</comment>
<comment type="subunit">
    <text evidence="1">Heptamer of 7 subunits arranged in a ring. Interacts with the chaperonin GroEL.</text>
</comment>
<comment type="subcellular location">
    <subcellularLocation>
        <location evidence="1">Cytoplasm</location>
    </subcellularLocation>
</comment>
<comment type="similarity">
    <text evidence="1">Belongs to the GroES chaperonin family.</text>
</comment>
<accession>B7GNF9</accession>
<accession>E8MNA3</accession>